<name>SYP_FRAT1</name>
<sequence>MKATQTLIATTKELPKEAVLISHQYMLKAGLIKKLASGIYTWMPLGLKVLQKIQNIVRDEMNKAGASELLLPSILPSELLQETHRWDKFGPELLKLHDRHNRDFCYGPTHEEPIVDMARDTIKSYKQLPLNLYQIQTKFRDEIRPRFGVMRAREFIMKDAYSFHENSQCLRNTYNTMYATYCNILDKIGLAYRPVKADTGAIGGDNSHEFQVLANAGEDIICYSNGSDYAANIELATYAKSDLSKRVNSQNTIEKIHTPNIKTIEKLCKEMSFDIKKTIKTMVIKDAGGNFFALVIRGDHELNETKINKLDQIIAPYTLATKEEIFSIFNANPGSLGIYNCPISIIADYSAIAITDLVCGANEDDYHFTNVNWDRDVTNYQIADIRNVVTGDISPDGKGTLELTNGIEVGHIFELEDVYSKPMNANIIGQDGKSKPMLMGCYGFGVSRVMAAAIEQSHDENGIIWPESIAPYQVAILPINYNKSDKIKEVADKLYQDLLGDGIDVLLDDRGARPGVMFADADLIGYSHHVVIGDRLLEQGLIEYKNRKTQEKQEITIAELIKILK</sequence>
<proteinExistence type="inferred from homology"/>
<keyword id="KW-0030">Aminoacyl-tRNA synthetase</keyword>
<keyword id="KW-0067">ATP-binding</keyword>
<keyword id="KW-0963">Cytoplasm</keyword>
<keyword id="KW-0436">Ligase</keyword>
<keyword id="KW-0547">Nucleotide-binding</keyword>
<keyword id="KW-0648">Protein biosynthesis</keyword>
<protein>
    <recommendedName>
        <fullName evidence="1">Proline--tRNA ligase</fullName>
        <ecNumber evidence="1">6.1.1.15</ecNumber>
    </recommendedName>
    <alternativeName>
        <fullName evidence="1">Prolyl-tRNA synthetase</fullName>
        <shortName evidence="1">ProRS</shortName>
    </alternativeName>
</protein>
<feature type="chain" id="PRO_0000288329" description="Proline--tRNA ligase">
    <location>
        <begin position="1"/>
        <end position="565"/>
    </location>
</feature>
<comment type="function">
    <text evidence="1">Catalyzes the attachment of proline to tRNA(Pro) in a two-step reaction: proline is first activated by ATP to form Pro-AMP and then transferred to the acceptor end of tRNA(Pro). As ProRS can inadvertently accommodate and process non-cognate amino acids such as alanine and cysteine, to avoid such errors it has two additional distinct editing activities against alanine. One activity is designated as 'pretransfer' editing and involves the tRNA(Pro)-independent hydrolysis of activated Ala-AMP. The other activity is designated 'posttransfer' editing and involves deacylation of mischarged Ala-tRNA(Pro). The misacylated Cys-tRNA(Pro) is not edited by ProRS.</text>
</comment>
<comment type="catalytic activity">
    <reaction evidence="1">
        <text>tRNA(Pro) + L-proline + ATP = L-prolyl-tRNA(Pro) + AMP + diphosphate</text>
        <dbReference type="Rhea" id="RHEA:14305"/>
        <dbReference type="Rhea" id="RHEA-COMP:9700"/>
        <dbReference type="Rhea" id="RHEA-COMP:9702"/>
        <dbReference type="ChEBI" id="CHEBI:30616"/>
        <dbReference type="ChEBI" id="CHEBI:33019"/>
        <dbReference type="ChEBI" id="CHEBI:60039"/>
        <dbReference type="ChEBI" id="CHEBI:78442"/>
        <dbReference type="ChEBI" id="CHEBI:78532"/>
        <dbReference type="ChEBI" id="CHEBI:456215"/>
        <dbReference type="EC" id="6.1.1.15"/>
    </reaction>
</comment>
<comment type="subunit">
    <text evidence="1">Homodimer.</text>
</comment>
<comment type="subcellular location">
    <subcellularLocation>
        <location evidence="1">Cytoplasm</location>
    </subcellularLocation>
</comment>
<comment type="domain">
    <text evidence="1">Consists of three domains: the N-terminal catalytic domain, the editing domain and the C-terminal anticodon-binding domain.</text>
</comment>
<comment type="similarity">
    <text evidence="1">Belongs to the class-II aminoacyl-tRNA synthetase family. ProS type 1 subfamily.</text>
</comment>
<gene>
    <name evidence="1" type="primary">proS</name>
    <name type="ordered locus">FTF1412</name>
</gene>
<dbReference type="EC" id="6.1.1.15" evidence="1"/>
<dbReference type="EMBL" id="AM286280">
    <property type="protein sequence ID" value="CAL09428.1"/>
    <property type="molecule type" value="Genomic_DNA"/>
</dbReference>
<dbReference type="RefSeq" id="WP_003022224.1">
    <property type="nucleotide sequence ID" value="NC_008245.1"/>
</dbReference>
<dbReference type="SMR" id="Q14GJ0"/>
<dbReference type="KEGG" id="ftf:FTF1412"/>
<dbReference type="HOGENOM" id="CLU_016739_0_0_6"/>
<dbReference type="GO" id="GO:0005829">
    <property type="term" value="C:cytosol"/>
    <property type="evidence" value="ECO:0007669"/>
    <property type="project" value="TreeGrafter"/>
</dbReference>
<dbReference type="GO" id="GO:0002161">
    <property type="term" value="F:aminoacyl-tRNA deacylase activity"/>
    <property type="evidence" value="ECO:0007669"/>
    <property type="project" value="InterPro"/>
</dbReference>
<dbReference type="GO" id="GO:0005524">
    <property type="term" value="F:ATP binding"/>
    <property type="evidence" value="ECO:0007669"/>
    <property type="project" value="UniProtKB-UniRule"/>
</dbReference>
<dbReference type="GO" id="GO:0004827">
    <property type="term" value="F:proline-tRNA ligase activity"/>
    <property type="evidence" value="ECO:0007669"/>
    <property type="project" value="UniProtKB-UniRule"/>
</dbReference>
<dbReference type="GO" id="GO:0006433">
    <property type="term" value="P:prolyl-tRNA aminoacylation"/>
    <property type="evidence" value="ECO:0007669"/>
    <property type="project" value="UniProtKB-UniRule"/>
</dbReference>
<dbReference type="CDD" id="cd04334">
    <property type="entry name" value="ProRS-INS"/>
    <property type="match status" value="1"/>
</dbReference>
<dbReference type="CDD" id="cd00861">
    <property type="entry name" value="ProRS_anticodon_short"/>
    <property type="match status" value="1"/>
</dbReference>
<dbReference type="CDD" id="cd00779">
    <property type="entry name" value="ProRS_core_prok"/>
    <property type="match status" value="1"/>
</dbReference>
<dbReference type="FunFam" id="3.30.930.10:FF:000015">
    <property type="entry name" value="Proline--tRNA ligase"/>
    <property type="match status" value="1"/>
</dbReference>
<dbReference type="Gene3D" id="3.40.50.800">
    <property type="entry name" value="Anticodon-binding domain"/>
    <property type="match status" value="1"/>
</dbReference>
<dbReference type="Gene3D" id="3.30.930.10">
    <property type="entry name" value="Bira Bifunctional Protein, Domain 2"/>
    <property type="match status" value="2"/>
</dbReference>
<dbReference type="HAMAP" id="MF_01569">
    <property type="entry name" value="Pro_tRNA_synth_type1"/>
    <property type="match status" value="1"/>
</dbReference>
<dbReference type="InterPro" id="IPR002314">
    <property type="entry name" value="aa-tRNA-synt_IIb"/>
</dbReference>
<dbReference type="InterPro" id="IPR006195">
    <property type="entry name" value="aa-tRNA-synth_II"/>
</dbReference>
<dbReference type="InterPro" id="IPR045864">
    <property type="entry name" value="aa-tRNA-synth_II/BPL/LPL"/>
</dbReference>
<dbReference type="InterPro" id="IPR004154">
    <property type="entry name" value="Anticodon-bd"/>
</dbReference>
<dbReference type="InterPro" id="IPR036621">
    <property type="entry name" value="Anticodon-bd_dom_sf"/>
</dbReference>
<dbReference type="InterPro" id="IPR002316">
    <property type="entry name" value="Pro-tRNA-ligase_IIa"/>
</dbReference>
<dbReference type="InterPro" id="IPR004500">
    <property type="entry name" value="Pro-tRNA-synth_IIa_bac-type"/>
</dbReference>
<dbReference type="InterPro" id="IPR023717">
    <property type="entry name" value="Pro-tRNA-Synthase_IIa_type1"/>
</dbReference>
<dbReference type="InterPro" id="IPR050062">
    <property type="entry name" value="Pro-tRNA_synthetase"/>
</dbReference>
<dbReference type="InterPro" id="IPR044140">
    <property type="entry name" value="ProRS_anticodon_short"/>
</dbReference>
<dbReference type="InterPro" id="IPR033730">
    <property type="entry name" value="ProRS_core_prok"/>
</dbReference>
<dbReference type="InterPro" id="IPR036754">
    <property type="entry name" value="YbaK/aa-tRNA-synt-asso_dom_sf"/>
</dbReference>
<dbReference type="InterPro" id="IPR007214">
    <property type="entry name" value="YbaK/aa-tRNA-synth-assoc-dom"/>
</dbReference>
<dbReference type="NCBIfam" id="NF006625">
    <property type="entry name" value="PRK09194.1"/>
    <property type="match status" value="1"/>
</dbReference>
<dbReference type="NCBIfam" id="TIGR00409">
    <property type="entry name" value="proS_fam_II"/>
    <property type="match status" value="1"/>
</dbReference>
<dbReference type="PANTHER" id="PTHR42753">
    <property type="entry name" value="MITOCHONDRIAL RIBOSOME PROTEIN L39/PROLYL-TRNA LIGASE FAMILY MEMBER"/>
    <property type="match status" value="1"/>
</dbReference>
<dbReference type="PANTHER" id="PTHR42753:SF2">
    <property type="entry name" value="PROLINE--TRNA LIGASE"/>
    <property type="match status" value="1"/>
</dbReference>
<dbReference type="Pfam" id="PF03129">
    <property type="entry name" value="HGTP_anticodon"/>
    <property type="match status" value="1"/>
</dbReference>
<dbReference type="Pfam" id="PF00587">
    <property type="entry name" value="tRNA-synt_2b"/>
    <property type="match status" value="1"/>
</dbReference>
<dbReference type="Pfam" id="PF04073">
    <property type="entry name" value="tRNA_edit"/>
    <property type="match status" value="1"/>
</dbReference>
<dbReference type="PRINTS" id="PR01046">
    <property type="entry name" value="TRNASYNTHPRO"/>
</dbReference>
<dbReference type="SUPFAM" id="SSF52954">
    <property type="entry name" value="Class II aaRS ABD-related"/>
    <property type="match status" value="1"/>
</dbReference>
<dbReference type="SUPFAM" id="SSF55681">
    <property type="entry name" value="Class II aaRS and biotin synthetases"/>
    <property type="match status" value="1"/>
</dbReference>
<dbReference type="SUPFAM" id="SSF55826">
    <property type="entry name" value="YbaK/ProRS associated domain"/>
    <property type="match status" value="1"/>
</dbReference>
<dbReference type="PROSITE" id="PS50862">
    <property type="entry name" value="AA_TRNA_LIGASE_II"/>
    <property type="match status" value="1"/>
</dbReference>
<organism>
    <name type="scientific">Francisella tularensis subsp. tularensis (strain FSC 198)</name>
    <dbReference type="NCBI Taxonomy" id="393115"/>
    <lineage>
        <taxon>Bacteria</taxon>
        <taxon>Pseudomonadati</taxon>
        <taxon>Pseudomonadota</taxon>
        <taxon>Gammaproteobacteria</taxon>
        <taxon>Thiotrichales</taxon>
        <taxon>Francisellaceae</taxon>
        <taxon>Francisella</taxon>
    </lineage>
</organism>
<evidence type="ECO:0000255" key="1">
    <source>
        <dbReference type="HAMAP-Rule" id="MF_01569"/>
    </source>
</evidence>
<accession>Q14GJ0</accession>
<reference key="1">
    <citation type="journal article" date="2007" name="PLoS ONE">
        <title>Genome sequencing shows that European isolates of Francisella tularensis subspecies tularensis are almost identical to US laboratory strain Schu S4.</title>
        <authorList>
            <person name="Chaudhuri R.R."/>
            <person name="Ren C.-P."/>
            <person name="Desmond L."/>
            <person name="Vincent G.A."/>
            <person name="Silman N.J."/>
            <person name="Brehm J.K."/>
            <person name="Elmore M.J."/>
            <person name="Hudson M.J."/>
            <person name="Forsman M."/>
            <person name="Isherwood K.E."/>
            <person name="Gurycova D."/>
            <person name="Minton N.P."/>
            <person name="Titball R.W."/>
            <person name="Pallen M.J."/>
            <person name="Vipond R."/>
        </authorList>
    </citation>
    <scope>NUCLEOTIDE SEQUENCE [LARGE SCALE GENOMIC DNA]</scope>
    <source>
        <strain>FSC 198</strain>
    </source>
</reference>